<protein>
    <recommendedName>
        <fullName>Proline-specific permease ProY</fullName>
    </recommendedName>
</protein>
<reference key="1">
    <citation type="submission" date="1997-01" db="EMBL/GenBank/DDBJ databases">
        <title>Sequence of minutes 4-25 of Escherichia coli.</title>
        <authorList>
            <person name="Chung E."/>
            <person name="Allen E."/>
            <person name="Araujo R."/>
            <person name="Aparicio A.M."/>
            <person name="Davis K."/>
            <person name="Duncan M."/>
            <person name="Federspiel N."/>
            <person name="Hyman R."/>
            <person name="Kalman S."/>
            <person name="Komp C."/>
            <person name="Kurdi O."/>
            <person name="Lew H."/>
            <person name="Lin D."/>
            <person name="Namath A."/>
            <person name="Oefner P."/>
            <person name="Roberts D."/>
            <person name="Schramm S."/>
            <person name="Davis R.W."/>
        </authorList>
    </citation>
    <scope>NUCLEOTIDE SEQUENCE [LARGE SCALE GENOMIC DNA]</scope>
    <source>
        <strain>K12 / MG1655 / ATCC 47076</strain>
    </source>
</reference>
<reference key="2">
    <citation type="journal article" date="1997" name="Science">
        <title>The complete genome sequence of Escherichia coli K-12.</title>
        <authorList>
            <person name="Blattner F.R."/>
            <person name="Plunkett G. III"/>
            <person name="Bloch C.A."/>
            <person name="Perna N.T."/>
            <person name="Burland V."/>
            <person name="Riley M."/>
            <person name="Collado-Vides J."/>
            <person name="Glasner J.D."/>
            <person name="Rode C.K."/>
            <person name="Mayhew G.F."/>
            <person name="Gregor J."/>
            <person name="Davis N.W."/>
            <person name="Kirkpatrick H.A."/>
            <person name="Goeden M.A."/>
            <person name="Rose D.J."/>
            <person name="Mau B."/>
            <person name="Shao Y."/>
        </authorList>
    </citation>
    <scope>NUCLEOTIDE SEQUENCE [LARGE SCALE GENOMIC DNA]</scope>
    <source>
        <strain>K12 / MG1655 / ATCC 47076</strain>
    </source>
</reference>
<reference key="3">
    <citation type="journal article" date="2006" name="Mol. Syst. Biol.">
        <title>Highly accurate genome sequences of Escherichia coli K-12 strains MG1655 and W3110.</title>
        <authorList>
            <person name="Hayashi K."/>
            <person name="Morooka N."/>
            <person name="Yamamoto Y."/>
            <person name="Fujita K."/>
            <person name="Isono K."/>
            <person name="Choi S."/>
            <person name="Ohtsubo E."/>
            <person name="Baba T."/>
            <person name="Wanner B.L."/>
            <person name="Mori H."/>
            <person name="Horiuchi T."/>
        </authorList>
    </citation>
    <scope>NUCLEOTIDE SEQUENCE [LARGE SCALE GENOMIC DNA]</scope>
    <source>
        <strain>K12 / W3110 / ATCC 27325 / DSM 5911</strain>
    </source>
</reference>
<reference key="4">
    <citation type="journal article" date="2005" name="Science">
        <title>Global topology analysis of the Escherichia coli inner membrane proteome.</title>
        <authorList>
            <person name="Daley D.O."/>
            <person name="Rapp M."/>
            <person name="Granseth E."/>
            <person name="Melen K."/>
            <person name="Drew D."/>
            <person name="von Heijne G."/>
        </authorList>
    </citation>
    <scope>TOPOLOGY [LARGE SCALE ANALYSIS]</scope>
    <source>
        <strain>K12 / MG1655 / ATCC 47076</strain>
    </source>
</reference>
<gene>
    <name type="primary">proY</name>
    <name type="synonym">yajM</name>
    <name type="ordered locus">b0402</name>
    <name type="ordered locus">JW5055</name>
</gene>
<comment type="function">
    <text>Permease that is involved in the transport across the cytoplasmic membrane of proline.</text>
</comment>
<comment type="subcellular location">
    <subcellularLocation>
        <location>Cell inner membrane</location>
        <topology>Multi-pass membrane protein</topology>
    </subcellularLocation>
</comment>
<comment type="similarity">
    <text evidence="2">Belongs to the amino acid-polyamine-organocation (APC) superfamily. Amino acid transporter (AAT) (TC 2.A.3.1) family.</text>
</comment>
<evidence type="ECO:0000255" key="1"/>
<evidence type="ECO:0000305" key="2"/>
<accession>P0AAE2</accession>
<accession>P77327</accession>
<accession>Q2MC24</accession>
<proteinExistence type="evidence at protein level"/>
<organism>
    <name type="scientific">Escherichia coli (strain K12)</name>
    <dbReference type="NCBI Taxonomy" id="83333"/>
    <lineage>
        <taxon>Bacteria</taxon>
        <taxon>Pseudomonadati</taxon>
        <taxon>Pseudomonadota</taxon>
        <taxon>Gammaproteobacteria</taxon>
        <taxon>Enterobacterales</taxon>
        <taxon>Enterobacteriaceae</taxon>
        <taxon>Escherichia</taxon>
    </lineage>
</organism>
<sequence length="457" mass="50216">MESKNKLKRGLSTRHIRFMALGSAIGTGLFYGSADAIKMAGPSVLLAYIIGGIAAYIIMRALGEMSVHNPAASSFSRYAQENLGPLAGYITGWTYCFEILIVAIADVTAFGIYMGVWFPTVPHWIWVLSVVLIICAVNLMSVKVFGELEFWFSFFKVATIIIMIVAGFGIIIWGIGNGGQPTGIHNLWSNGGFFSNGWLGMVMSLQMVMFAYGGIEIIGITAGEAKDPEKSIPRAINSVPMRILVFYVGTLFVIMSIYPWNQVGTAGSPFVLTFQHMGITFAASILNFVVLTASLSAINSDVFGVGRMLHGMAEQGSAPKIFSKTSRRGIPWVTVLVMTTALLFAVYLNYIMPENVFLVIASLATFATVWVWIMILLSQIAFRRRLPPEEVKALKFKVPGGVATTIGGLIFLLFIIGLIGYHPDTRISLYVGFAWIVVLLIGWMFKRRHDRQLAENQ</sequence>
<dbReference type="EMBL" id="U82664">
    <property type="protein sequence ID" value="AAB40158.1"/>
    <property type="molecule type" value="Genomic_DNA"/>
</dbReference>
<dbReference type="EMBL" id="U00096">
    <property type="protein sequence ID" value="AAC73505.1"/>
    <property type="molecule type" value="Genomic_DNA"/>
</dbReference>
<dbReference type="EMBL" id="AP009048">
    <property type="protein sequence ID" value="BAE76182.1"/>
    <property type="molecule type" value="Genomic_DNA"/>
</dbReference>
<dbReference type="PIR" id="B64769">
    <property type="entry name" value="B64769"/>
</dbReference>
<dbReference type="RefSeq" id="NP_414936.1">
    <property type="nucleotide sequence ID" value="NC_000913.3"/>
</dbReference>
<dbReference type="RefSeq" id="WP_001295329.1">
    <property type="nucleotide sequence ID" value="NZ_SSZK01000009.1"/>
</dbReference>
<dbReference type="SMR" id="P0AAE2"/>
<dbReference type="BioGRID" id="4262813">
    <property type="interactions" value="4"/>
</dbReference>
<dbReference type="DIP" id="DIP-47977N"/>
<dbReference type="FunCoup" id="P0AAE2">
    <property type="interactions" value="74"/>
</dbReference>
<dbReference type="IntAct" id="P0AAE2">
    <property type="interactions" value="1"/>
</dbReference>
<dbReference type="STRING" id="511145.b0402"/>
<dbReference type="TCDB" id="2.A.3.1.23">
    <property type="family name" value="the amino acid-polyamine-organocation (apc) family"/>
</dbReference>
<dbReference type="PaxDb" id="511145-b0402"/>
<dbReference type="EnsemblBacteria" id="AAC73505">
    <property type="protein sequence ID" value="AAC73505"/>
    <property type="gene ID" value="b0402"/>
</dbReference>
<dbReference type="GeneID" id="75202824"/>
<dbReference type="GeneID" id="945050"/>
<dbReference type="KEGG" id="ecj:JW5055"/>
<dbReference type="KEGG" id="eco:b0402"/>
<dbReference type="KEGG" id="ecoc:C3026_01955"/>
<dbReference type="PATRIC" id="fig|1411691.4.peg.1875"/>
<dbReference type="EchoBASE" id="EB3376"/>
<dbReference type="eggNOG" id="COG1113">
    <property type="taxonomic scope" value="Bacteria"/>
</dbReference>
<dbReference type="HOGENOM" id="CLU_007946_9_3_6"/>
<dbReference type="InParanoid" id="P0AAE2"/>
<dbReference type="OMA" id="PHWVWVL"/>
<dbReference type="OrthoDB" id="5297508at2"/>
<dbReference type="PhylomeDB" id="P0AAE2"/>
<dbReference type="BioCyc" id="EcoCyc:PROY-MONOMER"/>
<dbReference type="PRO" id="PR:P0AAE2"/>
<dbReference type="Proteomes" id="UP000000625">
    <property type="component" value="Chromosome"/>
</dbReference>
<dbReference type="GO" id="GO:0016020">
    <property type="term" value="C:membrane"/>
    <property type="evidence" value="ECO:0000318"/>
    <property type="project" value="GO_Central"/>
</dbReference>
<dbReference type="GO" id="GO:0005886">
    <property type="term" value="C:plasma membrane"/>
    <property type="evidence" value="ECO:0000314"/>
    <property type="project" value="EcoCyc"/>
</dbReference>
<dbReference type="GO" id="GO:0015171">
    <property type="term" value="F:amino acid transmembrane transporter activity"/>
    <property type="evidence" value="ECO:0000318"/>
    <property type="project" value="GO_Central"/>
</dbReference>
<dbReference type="GO" id="GO:0003333">
    <property type="term" value="P:amino acid transmembrane transport"/>
    <property type="evidence" value="ECO:0000318"/>
    <property type="project" value="GO_Central"/>
</dbReference>
<dbReference type="FunFam" id="1.20.1740.10:FF:000001">
    <property type="entry name" value="Amino acid permease"/>
    <property type="match status" value="1"/>
</dbReference>
<dbReference type="Gene3D" id="1.20.1740.10">
    <property type="entry name" value="Amino acid/polyamine transporter I"/>
    <property type="match status" value="1"/>
</dbReference>
<dbReference type="InterPro" id="IPR004841">
    <property type="entry name" value="AA-permease/SLC12A_dom"/>
</dbReference>
<dbReference type="InterPro" id="IPR004840">
    <property type="entry name" value="Amino_acid_permease_CS"/>
</dbReference>
<dbReference type="NCBIfam" id="NF007876">
    <property type="entry name" value="PRK10580.1"/>
    <property type="match status" value="1"/>
</dbReference>
<dbReference type="PANTHER" id="PTHR43495">
    <property type="entry name" value="GABA PERMEASE"/>
    <property type="match status" value="1"/>
</dbReference>
<dbReference type="PANTHER" id="PTHR43495:SF6">
    <property type="entry name" value="THREONINE_SERINE TRANSPORTER YBXG-RELATED"/>
    <property type="match status" value="1"/>
</dbReference>
<dbReference type="Pfam" id="PF00324">
    <property type="entry name" value="AA_permease"/>
    <property type="match status" value="1"/>
</dbReference>
<dbReference type="PIRSF" id="PIRSF006060">
    <property type="entry name" value="AA_transporter"/>
    <property type="match status" value="1"/>
</dbReference>
<dbReference type="PROSITE" id="PS00218">
    <property type="entry name" value="AMINO_ACID_PERMEASE_1"/>
    <property type="match status" value="1"/>
</dbReference>
<keyword id="KW-0029">Amino-acid transport</keyword>
<keyword id="KW-0997">Cell inner membrane</keyword>
<keyword id="KW-1003">Cell membrane</keyword>
<keyword id="KW-0472">Membrane</keyword>
<keyword id="KW-1185">Reference proteome</keyword>
<keyword id="KW-0812">Transmembrane</keyword>
<keyword id="KW-1133">Transmembrane helix</keyword>
<keyword id="KW-0813">Transport</keyword>
<feature type="chain" id="PRO_0000054207" description="Proline-specific permease ProY">
    <location>
        <begin position="1"/>
        <end position="457"/>
    </location>
</feature>
<feature type="topological domain" description="Cytoplasmic" evidence="1">
    <location>
        <begin position="1"/>
        <end position="17"/>
    </location>
</feature>
<feature type="transmembrane region" description="Helical" evidence="1">
    <location>
        <begin position="18"/>
        <end position="38"/>
    </location>
</feature>
<feature type="transmembrane region" description="Helical" evidence="1">
    <location>
        <begin position="39"/>
        <end position="59"/>
    </location>
</feature>
<feature type="topological domain" description="Cytoplasmic" evidence="1">
    <location>
        <begin position="60"/>
        <end position="84"/>
    </location>
</feature>
<feature type="transmembrane region" description="Helical" evidence="1">
    <location>
        <begin position="85"/>
        <end position="105"/>
    </location>
</feature>
<feature type="topological domain" description="Periplasmic" evidence="1">
    <location>
        <begin position="106"/>
        <end position="113"/>
    </location>
</feature>
<feature type="transmembrane region" description="Helical" evidence="1">
    <location>
        <begin position="114"/>
        <end position="134"/>
    </location>
</feature>
<feature type="topological domain" description="Cytoplasmic" evidence="1">
    <location>
        <begin position="135"/>
        <end position="156"/>
    </location>
</feature>
<feature type="transmembrane region" description="Helical" evidence="1">
    <location>
        <begin position="157"/>
        <end position="177"/>
    </location>
</feature>
<feature type="topological domain" description="Periplasmic" evidence="1">
    <location>
        <begin position="178"/>
        <end position="197"/>
    </location>
</feature>
<feature type="transmembrane region" description="Helical" evidence="1">
    <location>
        <begin position="198"/>
        <end position="218"/>
    </location>
</feature>
<feature type="topological domain" description="Cytoplasmic" evidence="1">
    <location>
        <begin position="219"/>
        <end position="242"/>
    </location>
</feature>
<feature type="transmembrane region" description="Helical" evidence="1">
    <location>
        <begin position="243"/>
        <end position="263"/>
    </location>
</feature>
<feature type="topological domain" description="Periplasmic" evidence="1">
    <location>
        <begin position="264"/>
        <end position="277"/>
    </location>
</feature>
<feature type="transmembrane region" description="Helical" evidence="1">
    <location>
        <begin position="278"/>
        <end position="298"/>
    </location>
</feature>
<feature type="topological domain" description="Cytoplasmic" evidence="1">
    <location>
        <begin position="299"/>
        <end position="331"/>
    </location>
</feature>
<feature type="transmembrane region" description="Helical" evidence="1">
    <location>
        <begin position="332"/>
        <end position="352"/>
    </location>
</feature>
<feature type="topological domain" description="Periplasmic" evidence="1">
    <location>
        <begin position="353"/>
        <end position="355"/>
    </location>
</feature>
<feature type="transmembrane region" description="Helical" evidence="1">
    <location>
        <begin position="356"/>
        <end position="376"/>
    </location>
</feature>
<feature type="topological domain" description="Cytoplasmic" evidence="1">
    <location>
        <begin position="377"/>
        <end position="399"/>
    </location>
</feature>
<feature type="transmembrane region" description="Helical" evidence="1">
    <location>
        <begin position="400"/>
        <end position="420"/>
    </location>
</feature>
<feature type="topological domain" description="Periplasmic" evidence="1">
    <location>
        <begin position="421"/>
        <end position="424"/>
    </location>
</feature>
<feature type="transmembrane region" description="Helical" evidence="1">
    <location>
        <begin position="425"/>
        <end position="445"/>
    </location>
</feature>
<feature type="topological domain" description="Cytoplasmic" evidence="1">
    <location>
        <begin position="446"/>
        <end position="457"/>
    </location>
</feature>
<name>PROY_ECOLI</name>